<evidence type="ECO:0000255" key="1">
    <source>
        <dbReference type="HAMAP-Rule" id="MF_01445"/>
    </source>
</evidence>
<protein>
    <recommendedName>
        <fullName evidence="1">tRNA N6-adenosine threonylcarbamoyltransferase</fullName>
        <ecNumber evidence="1">2.3.1.234</ecNumber>
    </recommendedName>
    <alternativeName>
        <fullName evidence="1">N6-L-threonylcarbamoyladenine synthase</fullName>
        <shortName evidence="1">t(6)A synthase</shortName>
    </alternativeName>
    <alternativeName>
        <fullName evidence="1">t(6)A37 threonylcarbamoyladenosine biosynthesis protein TsaD</fullName>
    </alternativeName>
    <alternativeName>
        <fullName evidence="1">tRNA threonylcarbamoyladenosine biosynthesis protein TsaD</fullName>
    </alternativeName>
</protein>
<accession>Q8KA56</accession>
<organism>
    <name type="scientific">Buchnera aphidicola subsp. Schizaphis graminum (strain Sg)</name>
    <dbReference type="NCBI Taxonomy" id="198804"/>
    <lineage>
        <taxon>Bacteria</taxon>
        <taxon>Pseudomonadati</taxon>
        <taxon>Pseudomonadota</taxon>
        <taxon>Gammaproteobacteria</taxon>
        <taxon>Enterobacterales</taxon>
        <taxon>Erwiniaceae</taxon>
        <taxon>Buchnera</taxon>
    </lineage>
</organism>
<comment type="function">
    <text evidence="1">Required for the formation of a threonylcarbamoyl group on adenosine at position 37 (t(6)A37) in tRNAs that read codons beginning with adenine. Is involved in the transfer of the threonylcarbamoyl moiety of threonylcarbamoyl-AMP (TC-AMP) to the N6 group of A37, together with TsaE and TsaB. TsaD likely plays a direct catalytic role in this reaction.</text>
</comment>
<comment type="catalytic activity">
    <reaction evidence="1">
        <text>L-threonylcarbamoyladenylate + adenosine(37) in tRNA = N(6)-L-threonylcarbamoyladenosine(37) in tRNA + AMP + H(+)</text>
        <dbReference type="Rhea" id="RHEA:37059"/>
        <dbReference type="Rhea" id="RHEA-COMP:10162"/>
        <dbReference type="Rhea" id="RHEA-COMP:10163"/>
        <dbReference type="ChEBI" id="CHEBI:15378"/>
        <dbReference type="ChEBI" id="CHEBI:73682"/>
        <dbReference type="ChEBI" id="CHEBI:74411"/>
        <dbReference type="ChEBI" id="CHEBI:74418"/>
        <dbReference type="ChEBI" id="CHEBI:456215"/>
        <dbReference type="EC" id="2.3.1.234"/>
    </reaction>
</comment>
<comment type="cofactor">
    <cofactor evidence="1">
        <name>Fe(2+)</name>
        <dbReference type="ChEBI" id="CHEBI:29033"/>
    </cofactor>
    <text evidence="1">Binds 1 Fe(2+) ion per subunit.</text>
</comment>
<comment type="subcellular location">
    <subcellularLocation>
        <location evidence="1">Cytoplasm</location>
    </subcellularLocation>
</comment>
<comment type="similarity">
    <text evidence="1">Belongs to the KAE1 / TsaD family.</text>
</comment>
<sequence length="337" mass="37383">MKVLGIETSCDDTGIAIYDVSKGLLINELHSQKKIHANYGGIIPELASREHTRKIIFLLDKIFKEKNIMKEIDLIAYTAGPGLAGSLLVGATFACSLGFSLNIPVLPVNHMEAHLLSPMLEYKSMQFPFIALLVSGKHTQIIAAYELGKYEILGNSLDDAAGEAFDKVSKMLGLKYPSGRELSSLAAQGIKNYFYFPRPMIHHSSLNFSFSGLKTFTSKVISNNTLNIQQKANIARAFEDAVIDVLLIKTKKALYKKGWKRLVIAGGVSANTVLRKRSKDMMENVFHGKVFYSSLKFCTDNGAMIAYLGSLRYKEASVSQLEIIVKPKWSIDKLSYI</sequence>
<name>TSAD_BUCAP</name>
<gene>
    <name evidence="1" type="primary">tsaD</name>
    <name type="synonym">gcp</name>
    <name type="ordered locus">BUsg_055</name>
</gene>
<keyword id="KW-0012">Acyltransferase</keyword>
<keyword id="KW-0963">Cytoplasm</keyword>
<keyword id="KW-0408">Iron</keyword>
<keyword id="KW-0479">Metal-binding</keyword>
<keyword id="KW-0808">Transferase</keyword>
<keyword id="KW-0819">tRNA processing</keyword>
<dbReference type="EC" id="2.3.1.234" evidence="1"/>
<dbReference type="EMBL" id="AE013218">
    <property type="protein sequence ID" value="AAM67626.1"/>
    <property type="molecule type" value="Genomic_DNA"/>
</dbReference>
<dbReference type="RefSeq" id="WP_011053592.1">
    <property type="nucleotide sequence ID" value="NC_004061.1"/>
</dbReference>
<dbReference type="SMR" id="Q8KA56"/>
<dbReference type="STRING" id="198804.BUsg_055"/>
<dbReference type="GeneID" id="93003522"/>
<dbReference type="KEGG" id="bas:BUsg_055"/>
<dbReference type="eggNOG" id="COG0533">
    <property type="taxonomic scope" value="Bacteria"/>
</dbReference>
<dbReference type="HOGENOM" id="CLU_023208_0_2_6"/>
<dbReference type="Proteomes" id="UP000000416">
    <property type="component" value="Chromosome"/>
</dbReference>
<dbReference type="GO" id="GO:0005737">
    <property type="term" value="C:cytoplasm"/>
    <property type="evidence" value="ECO:0007669"/>
    <property type="project" value="UniProtKB-SubCell"/>
</dbReference>
<dbReference type="GO" id="GO:0005506">
    <property type="term" value="F:iron ion binding"/>
    <property type="evidence" value="ECO:0007669"/>
    <property type="project" value="UniProtKB-UniRule"/>
</dbReference>
<dbReference type="GO" id="GO:0061711">
    <property type="term" value="F:N(6)-L-threonylcarbamoyladenine synthase activity"/>
    <property type="evidence" value="ECO:0007669"/>
    <property type="project" value="UniProtKB-EC"/>
</dbReference>
<dbReference type="GO" id="GO:0002949">
    <property type="term" value="P:tRNA threonylcarbamoyladenosine modification"/>
    <property type="evidence" value="ECO:0007669"/>
    <property type="project" value="UniProtKB-UniRule"/>
</dbReference>
<dbReference type="CDD" id="cd24133">
    <property type="entry name" value="ASKHA_NBD_TsaD_bac"/>
    <property type="match status" value="1"/>
</dbReference>
<dbReference type="FunFam" id="3.30.420.40:FF:000012">
    <property type="entry name" value="tRNA N6-adenosine threonylcarbamoyltransferase"/>
    <property type="match status" value="1"/>
</dbReference>
<dbReference type="Gene3D" id="3.30.420.40">
    <property type="match status" value="2"/>
</dbReference>
<dbReference type="HAMAP" id="MF_01445">
    <property type="entry name" value="TsaD"/>
    <property type="match status" value="1"/>
</dbReference>
<dbReference type="InterPro" id="IPR043129">
    <property type="entry name" value="ATPase_NBD"/>
</dbReference>
<dbReference type="InterPro" id="IPR000905">
    <property type="entry name" value="Gcp-like_dom"/>
</dbReference>
<dbReference type="InterPro" id="IPR017861">
    <property type="entry name" value="KAE1/TsaD"/>
</dbReference>
<dbReference type="InterPro" id="IPR017860">
    <property type="entry name" value="Peptidase_M22_CS"/>
</dbReference>
<dbReference type="InterPro" id="IPR022450">
    <property type="entry name" value="TsaD"/>
</dbReference>
<dbReference type="NCBIfam" id="TIGR00329">
    <property type="entry name" value="gcp_kae1"/>
    <property type="match status" value="1"/>
</dbReference>
<dbReference type="NCBIfam" id="TIGR03723">
    <property type="entry name" value="T6A_TsaD_YgjD"/>
    <property type="match status" value="1"/>
</dbReference>
<dbReference type="PANTHER" id="PTHR11735">
    <property type="entry name" value="TRNA N6-ADENOSINE THREONYLCARBAMOYLTRANSFERASE"/>
    <property type="match status" value="1"/>
</dbReference>
<dbReference type="PANTHER" id="PTHR11735:SF6">
    <property type="entry name" value="TRNA N6-ADENOSINE THREONYLCARBAMOYLTRANSFERASE, MITOCHONDRIAL"/>
    <property type="match status" value="1"/>
</dbReference>
<dbReference type="Pfam" id="PF00814">
    <property type="entry name" value="TsaD"/>
    <property type="match status" value="1"/>
</dbReference>
<dbReference type="PRINTS" id="PR00789">
    <property type="entry name" value="OSIALOPTASE"/>
</dbReference>
<dbReference type="SUPFAM" id="SSF53067">
    <property type="entry name" value="Actin-like ATPase domain"/>
    <property type="match status" value="2"/>
</dbReference>
<dbReference type="PROSITE" id="PS01016">
    <property type="entry name" value="GLYCOPROTEASE"/>
    <property type="match status" value="1"/>
</dbReference>
<proteinExistence type="inferred from homology"/>
<reference key="1">
    <citation type="journal article" date="2002" name="Science">
        <title>50 million years of genomic stasis in endosymbiotic bacteria.</title>
        <authorList>
            <person name="Tamas I."/>
            <person name="Klasson L."/>
            <person name="Canbaeck B."/>
            <person name="Naeslund A.K."/>
            <person name="Eriksson A.-S."/>
            <person name="Wernegreen J.J."/>
            <person name="Sandstroem J.P."/>
            <person name="Moran N.A."/>
            <person name="Andersson S.G.E."/>
        </authorList>
    </citation>
    <scope>NUCLEOTIDE SEQUENCE [LARGE SCALE GENOMIC DNA]</scope>
    <source>
        <strain>Sg</strain>
    </source>
</reference>
<feature type="chain" id="PRO_0000096960" description="tRNA N6-adenosine threonylcarbamoyltransferase">
    <location>
        <begin position="1"/>
        <end position="337"/>
    </location>
</feature>
<feature type="binding site" evidence="1">
    <location>
        <position position="110"/>
    </location>
    <ligand>
        <name>Fe cation</name>
        <dbReference type="ChEBI" id="CHEBI:24875"/>
    </ligand>
</feature>
<feature type="binding site" evidence="1">
    <location>
        <position position="114"/>
    </location>
    <ligand>
        <name>Fe cation</name>
        <dbReference type="ChEBI" id="CHEBI:24875"/>
    </ligand>
</feature>
<feature type="binding site" evidence="1">
    <location>
        <begin position="133"/>
        <end position="137"/>
    </location>
    <ligand>
        <name>substrate</name>
    </ligand>
</feature>
<feature type="binding site" evidence="1">
    <location>
        <position position="166"/>
    </location>
    <ligand>
        <name>substrate</name>
    </ligand>
</feature>
<feature type="binding site" evidence="1">
    <location>
        <position position="179"/>
    </location>
    <ligand>
        <name>substrate</name>
    </ligand>
</feature>
<feature type="binding site" evidence="1">
    <location>
        <position position="271"/>
    </location>
    <ligand>
        <name>substrate</name>
    </ligand>
</feature>
<feature type="binding site" evidence="1">
    <location>
        <position position="300"/>
    </location>
    <ligand>
        <name>Fe cation</name>
        <dbReference type="ChEBI" id="CHEBI:24875"/>
    </ligand>
</feature>